<protein>
    <recommendedName>
        <fullName evidence="1">Small ribosomal subunit protein bS18</fullName>
    </recommendedName>
    <alternativeName>
        <fullName evidence="2">30S ribosomal protein S18</fullName>
    </alternativeName>
</protein>
<proteinExistence type="inferred from homology"/>
<name>RS18_EDWI9</name>
<feature type="chain" id="PRO_1000204727" description="Small ribosomal subunit protein bS18">
    <location>
        <begin position="1"/>
        <end position="75"/>
    </location>
</feature>
<gene>
    <name evidence="1" type="primary">rpsR</name>
    <name type="ordered locus">NT01EI_0426</name>
</gene>
<dbReference type="EMBL" id="CP001600">
    <property type="protein sequence ID" value="ACR67664.1"/>
    <property type="molecule type" value="Genomic_DNA"/>
</dbReference>
<dbReference type="RefSeq" id="WP_000135199.1">
    <property type="nucleotide sequence ID" value="NZ_CP169062.1"/>
</dbReference>
<dbReference type="SMR" id="C5BF78"/>
<dbReference type="STRING" id="67780.B6E78_12900"/>
<dbReference type="GeneID" id="98186237"/>
<dbReference type="KEGG" id="eic:NT01EI_0426"/>
<dbReference type="HOGENOM" id="CLU_148710_2_3_6"/>
<dbReference type="OrthoDB" id="9812008at2"/>
<dbReference type="Proteomes" id="UP000001485">
    <property type="component" value="Chromosome"/>
</dbReference>
<dbReference type="GO" id="GO:0022627">
    <property type="term" value="C:cytosolic small ribosomal subunit"/>
    <property type="evidence" value="ECO:0007669"/>
    <property type="project" value="TreeGrafter"/>
</dbReference>
<dbReference type="GO" id="GO:0070181">
    <property type="term" value="F:small ribosomal subunit rRNA binding"/>
    <property type="evidence" value="ECO:0007669"/>
    <property type="project" value="TreeGrafter"/>
</dbReference>
<dbReference type="GO" id="GO:0003735">
    <property type="term" value="F:structural constituent of ribosome"/>
    <property type="evidence" value="ECO:0007669"/>
    <property type="project" value="InterPro"/>
</dbReference>
<dbReference type="GO" id="GO:0006412">
    <property type="term" value="P:translation"/>
    <property type="evidence" value="ECO:0007669"/>
    <property type="project" value="UniProtKB-UniRule"/>
</dbReference>
<dbReference type="FunFam" id="4.10.640.10:FF:000001">
    <property type="entry name" value="30S ribosomal protein S18"/>
    <property type="match status" value="1"/>
</dbReference>
<dbReference type="Gene3D" id="4.10.640.10">
    <property type="entry name" value="Ribosomal protein S18"/>
    <property type="match status" value="1"/>
</dbReference>
<dbReference type="HAMAP" id="MF_00270">
    <property type="entry name" value="Ribosomal_bS18"/>
    <property type="match status" value="1"/>
</dbReference>
<dbReference type="InterPro" id="IPR001648">
    <property type="entry name" value="Ribosomal_bS18"/>
</dbReference>
<dbReference type="InterPro" id="IPR018275">
    <property type="entry name" value="Ribosomal_bS18_CS"/>
</dbReference>
<dbReference type="InterPro" id="IPR036870">
    <property type="entry name" value="Ribosomal_bS18_sf"/>
</dbReference>
<dbReference type="NCBIfam" id="TIGR00165">
    <property type="entry name" value="S18"/>
    <property type="match status" value="1"/>
</dbReference>
<dbReference type="PANTHER" id="PTHR13479">
    <property type="entry name" value="30S RIBOSOMAL PROTEIN S18"/>
    <property type="match status" value="1"/>
</dbReference>
<dbReference type="PANTHER" id="PTHR13479:SF40">
    <property type="entry name" value="SMALL RIBOSOMAL SUBUNIT PROTEIN BS18M"/>
    <property type="match status" value="1"/>
</dbReference>
<dbReference type="Pfam" id="PF01084">
    <property type="entry name" value="Ribosomal_S18"/>
    <property type="match status" value="1"/>
</dbReference>
<dbReference type="PRINTS" id="PR00974">
    <property type="entry name" value="RIBOSOMALS18"/>
</dbReference>
<dbReference type="SUPFAM" id="SSF46911">
    <property type="entry name" value="Ribosomal protein S18"/>
    <property type="match status" value="1"/>
</dbReference>
<dbReference type="PROSITE" id="PS00057">
    <property type="entry name" value="RIBOSOMAL_S18"/>
    <property type="match status" value="1"/>
</dbReference>
<accession>C5BF78</accession>
<keyword id="KW-0687">Ribonucleoprotein</keyword>
<keyword id="KW-0689">Ribosomal protein</keyword>
<keyword id="KW-0694">RNA-binding</keyword>
<keyword id="KW-0699">rRNA-binding</keyword>
<sequence>MARYFRRRKFCRFTAEGVQEIDYKDIATLKNYITESGKIVPSRITGTRAKYQRQLARAIKRARYLSLLPYTDRHQ</sequence>
<evidence type="ECO:0000255" key="1">
    <source>
        <dbReference type="HAMAP-Rule" id="MF_00270"/>
    </source>
</evidence>
<evidence type="ECO:0000305" key="2"/>
<organism>
    <name type="scientific">Edwardsiella ictaluri (strain 93-146)</name>
    <dbReference type="NCBI Taxonomy" id="634503"/>
    <lineage>
        <taxon>Bacteria</taxon>
        <taxon>Pseudomonadati</taxon>
        <taxon>Pseudomonadota</taxon>
        <taxon>Gammaproteobacteria</taxon>
        <taxon>Enterobacterales</taxon>
        <taxon>Hafniaceae</taxon>
        <taxon>Edwardsiella</taxon>
    </lineage>
</organism>
<comment type="function">
    <text evidence="1">Binds as a heterodimer with protein bS6 to the central domain of the 16S rRNA, where it helps stabilize the platform of the 30S subunit.</text>
</comment>
<comment type="subunit">
    <text evidence="1">Part of the 30S ribosomal subunit. Forms a tight heterodimer with protein bS6.</text>
</comment>
<comment type="similarity">
    <text evidence="1">Belongs to the bacterial ribosomal protein bS18 family.</text>
</comment>
<reference key="1">
    <citation type="submission" date="2009-03" db="EMBL/GenBank/DDBJ databases">
        <title>Complete genome sequence of Edwardsiella ictaluri 93-146.</title>
        <authorList>
            <person name="Williams M.L."/>
            <person name="Gillaspy A.F."/>
            <person name="Dyer D.W."/>
            <person name="Thune R.L."/>
            <person name="Waldbieser G.C."/>
            <person name="Schuster S.C."/>
            <person name="Gipson J."/>
            <person name="Zaitshik J."/>
            <person name="Landry C."/>
            <person name="Lawrence M.L."/>
        </authorList>
    </citation>
    <scope>NUCLEOTIDE SEQUENCE [LARGE SCALE GENOMIC DNA]</scope>
    <source>
        <strain>93-146</strain>
    </source>
</reference>